<feature type="chain" id="PRO_0000191114" description="Chaperone protein ClpB">
    <location>
        <begin position="1"/>
        <end position="849"/>
    </location>
</feature>
<feature type="domain" description="Clp R" evidence="2">
    <location>
        <begin position="1"/>
        <end position="147"/>
    </location>
</feature>
<feature type="region of interest" description="Disordered" evidence="3">
    <location>
        <begin position="1"/>
        <end position="25"/>
    </location>
</feature>
<feature type="region of interest" description="Repeat 1" evidence="2">
    <location>
        <begin position="6"/>
        <end position="71"/>
    </location>
</feature>
<feature type="region of interest" description="Repeat 2" evidence="2">
    <location>
        <begin position="84"/>
        <end position="147"/>
    </location>
</feature>
<feature type="region of interest" description="NBD1" evidence="1">
    <location>
        <begin position="160"/>
        <end position="342"/>
    </location>
</feature>
<feature type="region of interest" description="Linker" evidence="1">
    <location>
        <begin position="343"/>
        <end position="546"/>
    </location>
</feature>
<feature type="region of interest" description="NBD2" evidence="1">
    <location>
        <begin position="556"/>
        <end position="754"/>
    </location>
</feature>
<feature type="region of interest" description="C-terminal" evidence="1">
    <location>
        <begin position="755"/>
        <end position="849"/>
    </location>
</feature>
<feature type="coiled-coil region" evidence="1">
    <location>
        <begin position="393"/>
        <end position="525"/>
    </location>
</feature>
<feature type="compositionally biased region" description="Polar residues" evidence="3">
    <location>
        <begin position="1"/>
        <end position="13"/>
    </location>
</feature>
<feature type="binding site" evidence="1">
    <location>
        <begin position="207"/>
        <end position="214"/>
    </location>
    <ligand>
        <name>ATP</name>
        <dbReference type="ChEBI" id="CHEBI:30616"/>
        <label>1</label>
    </ligand>
</feature>
<feature type="binding site" evidence="1">
    <location>
        <begin position="606"/>
        <end position="613"/>
    </location>
    <ligand>
        <name>ATP</name>
        <dbReference type="ChEBI" id="CHEBI:30616"/>
        <label>2</label>
    </ligand>
</feature>
<dbReference type="EMBL" id="BX248360">
    <property type="protein sequence ID" value="CAE50634.1"/>
    <property type="molecule type" value="Genomic_DNA"/>
</dbReference>
<dbReference type="RefSeq" id="WP_010935575.1">
    <property type="nucleotide sequence ID" value="NC_002935.2"/>
</dbReference>
<dbReference type="SMR" id="Q6NF05"/>
<dbReference type="STRING" id="257309.DIP2104"/>
<dbReference type="KEGG" id="cdi:DIP2104"/>
<dbReference type="HOGENOM" id="CLU_005070_4_0_11"/>
<dbReference type="Proteomes" id="UP000002198">
    <property type="component" value="Chromosome"/>
</dbReference>
<dbReference type="GO" id="GO:0005737">
    <property type="term" value="C:cytoplasm"/>
    <property type="evidence" value="ECO:0007669"/>
    <property type="project" value="UniProtKB-SubCell"/>
</dbReference>
<dbReference type="GO" id="GO:0005524">
    <property type="term" value="F:ATP binding"/>
    <property type="evidence" value="ECO:0007669"/>
    <property type="project" value="UniProtKB-KW"/>
</dbReference>
<dbReference type="GO" id="GO:0016887">
    <property type="term" value="F:ATP hydrolysis activity"/>
    <property type="evidence" value="ECO:0007669"/>
    <property type="project" value="InterPro"/>
</dbReference>
<dbReference type="GO" id="GO:0034605">
    <property type="term" value="P:cellular response to heat"/>
    <property type="evidence" value="ECO:0007669"/>
    <property type="project" value="TreeGrafter"/>
</dbReference>
<dbReference type="GO" id="GO:0042026">
    <property type="term" value="P:protein refolding"/>
    <property type="evidence" value="ECO:0007669"/>
    <property type="project" value="InterPro"/>
</dbReference>
<dbReference type="CDD" id="cd00009">
    <property type="entry name" value="AAA"/>
    <property type="match status" value="1"/>
</dbReference>
<dbReference type="CDD" id="cd19499">
    <property type="entry name" value="RecA-like_ClpB_Hsp104-like"/>
    <property type="match status" value="1"/>
</dbReference>
<dbReference type="FunFam" id="1.10.8.60:FF:000017">
    <property type="entry name" value="ATP-dependent chaperone ClpB"/>
    <property type="match status" value="1"/>
</dbReference>
<dbReference type="FunFam" id="3.40.50.300:FF:000120">
    <property type="entry name" value="ATP-dependent chaperone ClpB"/>
    <property type="match status" value="1"/>
</dbReference>
<dbReference type="FunFam" id="3.40.50.300:FF:000025">
    <property type="entry name" value="ATP-dependent Clp protease subunit"/>
    <property type="match status" value="1"/>
</dbReference>
<dbReference type="FunFam" id="3.40.50.300:FF:000010">
    <property type="entry name" value="Chaperone clpB 1, putative"/>
    <property type="match status" value="1"/>
</dbReference>
<dbReference type="Gene3D" id="1.10.8.60">
    <property type="match status" value="1"/>
</dbReference>
<dbReference type="Gene3D" id="1.10.1780.10">
    <property type="entry name" value="Clp, N-terminal domain"/>
    <property type="match status" value="1"/>
</dbReference>
<dbReference type="Gene3D" id="3.40.50.300">
    <property type="entry name" value="P-loop containing nucleotide triphosphate hydrolases"/>
    <property type="match status" value="3"/>
</dbReference>
<dbReference type="InterPro" id="IPR003593">
    <property type="entry name" value="AAA+_ATPase"/>
</dbReference>
<dbReference type="InterPro" id="IPR003959">
    <property type="entry name" value="ATPase_AAA_core"/>
</dbReference>
<dbReference type="InterPro" id="IPR017730">
    <property type="entry name" value="Chaperonin_ClpB"/>
</dbReference>
<dbReference type="InterPro" id="IPR019489">
    <property type="entry name" value="Clp_ATPase_C"/>
</dbReference>
<dbReference type="InterPro" id="IPR036628">
    <property type="entry name" value="Clp_N_dom_sf"/>
</dbReference>
<dbReference type="InterPro" id="IPR004176">
    <property type="entry name" value="Clp_R_dom"/>
</dbReference>
<dbReference type="InterPro" id="IPR001270">
    <property type="entry name" value="ClpA/B"/>
</dbReference>
<dbReference type="InterPro" id="IPR018368">
    <property type="entry name" value="ClpA/B_CS1"/>
</dbReference>
<dbReference type="InterPro" id="IPR028299">
    <property type="entry name" value="ClpA/B_CS2"/>
</dbReference>
<dbReference type="InterPro" id="IPR041546">
    <property type="entry name" value="ClpA/ClpB_AAA_lid"/>
</dbReference>
<dbReference type="InterPro" id="IPR050130">
    <property type="entry name" value="ClpA_ClpB"/>
</dbReference>
<dbReference type="InterPro" id="IPR027417">
    <property type="entry name" value="P-loop_NTPase"/>
</dbReference>
<dbReference type="NCBIfam" id="TIGR03346">
    <property type="entry name" value="chaperone_ClpB"/>
    <property type="match status" value="1"/>
</dbReference>
<dbReference type="PANTHER" id="PTHR11638">
    <property type="entry name" value="ATP-DEPENDENT CLP PROTEASE"/>
    <property type="match status" value="1"/>
</dbReference>
<dbReference type="PANTHER" id="PTHR11638:SF18">
    <property type="entry name" value="HEAT SHOCK PROTEIN 104"/>
    <property type="match status" value="1"/>
</dbReference>
<dbReference type="Pfam" id="PF00004">
    <property type="entry name" value="AAA"/>
    <property type="match status" value="1"/>
</dbReference>
<dbReference type="Pfam" id="PF07724">
    <property type="entry name" value="AAA_2"/>
    <property type="match status" value="1"/>
</dbReference>
<dbReference type="Pfam" id="PF17871">
    <property type="entry name" value="AAA_lid_9"/>
    <property type="match status" value="1"/>
</dbReference>
<dbReference type="Pfam" id="PF02861">
    <property type="entry name" value="Clp_N"/>
    <property type="match status" value="2"/>
</dbReference>
<dbReference type="Pfam" id="PF10431">
    <property type="entry name" value="ClpB_D2-small"/>
    <property type="match status" value="1"/>
</dbReference>
<dbReference type="PRINTS" id="PR00300">
    <property type="entry name" value="CLPPROTEASEA"/>
</dbReference>
<dbReference type="SMART" id="SM00382">
    <property type="entry name" value="AAA"/>
    <property type="match status" value="2"/>
</dbReference>
<dbReference type="SMART" id="SM01086">
    <property type="entry name" value="ClpB_D2-small"/>
    <property type="match status" value="1"/>
</dbReference>
<dbReference type="SUPFAM" id="SSF81923">
    <property type="entry name" value="Double Clp-N motif"/>
    <property type="match status" value="1"/>
</dbReference>
<dbReference type="SUPFAM" id="SSF52540">
    <property type="entry name" value="P-loop containing nucleoside triphosphate hydrolases"/>
    <property type="match status" value="2"/>
</dbReference>
<dbReference type="PROSITE" id="PS51903">
    <property type="entry name" value="CLP_R"/>
    <property type="match status" value="1"/>
</dbReference>
<dbReference type="PROSITE" id="PS00870">
    <property type="entry name" value="CLPAB_1"/>
    <property type="match status" value="1"/>
</dbReference>
<dbReference type="PROSITE" id="PS00871">
    <property type="entry name" value="CLPAB_2"/>
    <property type="match status" value="1"/>
</dbReference>
<proteinExistence type="inferred from homology"/>
<sequence>MAGFNPTTKTQEALQEALQKASAAGNPDIRPEHLLAAILGQEDGIAIPVLRATGVDPDVVRREAEALVAKLPKAEGANLANPNFNRDALSVLNNAQELAGELGDEYVSTEVLLAAVARGTNDAAELLTKRGATYDVIKGVFPSVRGNKKVTTESPEDQFQALEKYSTDLTARAREGKIDPVIGRDQEIRRVVQVLSRRTKNNPVLIGEPGVGKTAIVEGLARRIVAGDVPESLKGKTLISLDLGSMVAGAKYRGEFEERLKAVLDEIKSAEGEIITFIDELHTIVGAGATGDSAMDAGNMIKPLLARGELRLVGATTLDEYRKYIEKDAALERRFQQVFVGEPSVEDAVGILRGLKERYEVHHGVRIQDSALVAAATLSDRYITSRFLPDKAIDLVDEAASRLRMEIDSSPQEIDELERIVRRLEIEEVALSKETDAASKDRLIKLRQELADEREKLGELVARWNNEKGAINKVREAKEELERLRSESEIAERDGDYGKVAELRYGRIPELEKQVAEAEEHTVETTMLSEEVTPDTIAEVVSAWTGIPAGKMLQGETEKLLNMEAELGKRVVGQSEAVVAVSDAVRRARAGVADPNRPTGSFLFLGPTGVGKTELAKALAEFMFDDDRAMVRIDMSEYGEKHAVARLVGAPPGYVGYDQGGQLTEAVRRRPYTVVLFDEVEKAHPDVFDILLQVLDEGRLTDGQGRTVDFRNTVLILTSNLGAGGTKDEMMDAVKRAFKPEFVNRLDDVVIFDPLSQEQLTHIVEIQIAQLAQRLAARRLTLAVSDSAKLWLAERGYEPAYGARPLRRLIQQAIGDQLAKKLLSGEVRDGSEVHVDADLDNDGLVISAS</sequence>
<evidence type="ECO:0000250" key="1"/>
<evidence type="ECO:0000255" key="2">
    <source>
        <dbReference type="PROSITE-ProRule" id="PRU01251"/>
    </source>
</evidence>
<evidence type="ECO:0000256" key="3">
    <source>
        <dbReference type="SAM" id="MobiDB-lite"/>
    </source>
</evidence>
<evidence type="ECO:0000305" key="4"/>
<keyword id="KW-0067">ATP-binding</keyword>
<keyword id="KW-0143">Chaperone</keyword>
<keyword id="KW-0175">Coiled coil</keyword>
<keyword id="KW-0963">Cytoplasm</keyword>
<keyword id="KW-0547">Nucleotide-binding</keyword>
<keyword id="KW-1185">Reference proteome</keyword>
<keyword id="KW-0677">Repeat</keyword>
<keyword id="KW-0346">Stress response</keyword>
<protein>
    <recommendedName>
        <fullName>Chaperone protein ClpB</fullName>
    </recommendedName>
</protein>
<reference key="1">
    <citation type="journal article" date="2003" name="Nucleic Acids Res.">
        <title>The complete genome sequence and analysis of Corynebacterium diphtheriae NCTC13129.</title>
        <authorList>
            <person name="Cerdeno-Tarraga A.-M."/>
            <person name="Efstratiou A."/>
            <person name="Dover L.G."/>
            <person name="Holden M.T.G."/>
            <person name="Pallen M.J."/>
            <person name="Bentley S.D."/>
            <person name="Besra G.S."/>
            <person name="Churcher C.M."/>
            <person name="James K.D."/>
            <person name="De Zoysa A."/>
            <person name="Chillingworth T."/>
            <person name="Cronin A."/>
            <person name="Dowd L."/>
            <person name="Feltwell T."/>
            <person name="Hamlin N."/>
            <person name="Holroyd S."/>
            <person name="Jagels K."/>
            <person name="Moule S."/>
            <person name="Quail M.A."/>
            <person name="Rabbinowitsch E."/>
            <person name="Rutherford K.M."/>
            <person name="Thomson N.R."/>
            <person name="Unwin L."/>
            <person name="Whitehead S."/>
            <person name="Barrell B.G."/>
            <person name="Parkhill J."/>
        </authorList>
    </citation>
    <scope>NUCLEOTIDE SEQUENCE [LARGE SCALE GENOMIC DNA]</scope>
    <source>
        <strain>ATCC 700971 / NCTC 13129 / Biotype gravis</strain>
    </source>
</reference>
<accession>Q6NF05</accession>
<name>CLPB_CORDI</name>
<comment type="function">
    <text evidence="1">Part of a stress-induced multi-chaperone system, it is involved in the recovery of the cell from heat-induced damage, in cooperation with DnaK, DnaJ and GrpE. Acts before DnaK, in the processing of protein aggregates. Protein binding stimulates the ATPase activity; ATP hydrolysis unfolds the denatured protein aggregates, which probably helps expose new hydrophobic binding sites on the surface of ClpB-bound aggregates, contributing to the solubilization and refolding of denatured protein aggregates by DnaK (By similarity).</text>
</comment>
<comment type="subunit">
    <text evidence="1">Homohexamer. The oligomerization is ATP-dependent (By similarity).</text>
</comment>
<comment type="subcellular location">
    <subcellularLocation>
        <location evidence="4">Cytoplasm</location>
    </subcellularLocation>
</comment>
<comment type="domain">
    <text evidence="1">The Clp repeat (R) domain probably functions as a substrate-discriminating domain, recruiting aggregated proteins to the ClpB hexamer and/or stabilizing bound proteins. The NBD2 domain is responsible for oligomerization, whereas the NBD1 domain stabilizes the hexamer probably in an ATP-dependent manner. The movement of the coiled-coil domain is essential for ClpB ability to rescue proteins from an aggregated state, probably by pulling apart large aggregated proteins, which are bound between the coiled-coils motifs of adjacent ClpB subunits in the functional hexamer (By similarity).</text>
</comment>
<comment type="similarity">
    <text evidence="4">Belongs to the ClpA/ClpB family.</text>
</comment>
<gene>
    <name type="primary">clpB</name>
    <name type="ordered locus">DIP2104</name>
</gene>
<organism>
    <name type="scientific">Corynebacterium diphtheriae (strain ATCC 700971 / NCTC 13129 / Biotype gravis)</name>
    <dbReference type="NCBI Taxonomy" id="257309"/>
    <lineage>
        <taxon>Bacteria</taxon>
        <taxon>Bacillati</taxon>
        <taxon>Actinomycetota</taxon>
        <taxon>Actinomycetes</taxon>
        <taxon>Mycobacteriales</taxon>
        <taxon>Corynebacteriaceae</taxon>
        <taxon>Corynebacterium</taxon>
    </lineage>
</organism>